<proteinExistence type="inferred from homology"/>
<reference key="1">
    <citation type="journal article" date="2000" name="Proc. Natl. Acad. Sci. U.S.A.">
        <title>Archaeal adaptation to higher temperatures revealed by genomic sequence of Thermoplasma volcanium.</title>
        <authorList>
            <person name="Kawashima T."/>
            <person name="Amano N."/>
            <person name="Koike H."/>
            <person name="Makino S."/>
            <person name="Higuchi S."/>
            <person name="Kawashima-Ohya Y."/>
            <person name="Watanabe K."/>
            <person name="Yamazaki M."/>
            <person name="Kanehori K."/>
            <person name="Kawamoto T."/>
            <person name="Nunoshiba T."/>
            <person name="Yamamoto Y."/>
            <person name="Aramaki H."/>
            <person name="Makino K."/>
            <person name="Suzuki M."/>
        </authorList>
    </citation>
    <scope>NUCLEOTIDE SEQUENCE [LARGE SCALE GENOMIC DNA]</scope>
    <source>
        <strain>ATCC 51530 / DSM 4299 / JCM 9571 / NBRC 15438 / GSS1</strain>
    </source>
</reference>
<accession>Q97C22</accession>
<keyword id="KW-0119">Carbohydrate metabolism</keyword>
<keyword id="KW-0378">Hydrolase</keyword>
<keyword id="KW-0460">Magnesium</keyword>
<keyword id="KW-0479">Metal-binding</keyword>
<evidence type="ECO:0000255" key="1">
    <source>
        <dbReference type="HAMAP-Rule" id="MF_01419"/>
    </source>
</evidence>
<organism>
    <name type="scientific">Thermoplasma volcanium (strain ATCC 51530 / DSM 4299 / JCM 9571 / NBRC 15438 / GSS1)</name>
    <dbReference type="NCBI Taxonomy" id="273116"/>
    <lineage>
        <taxon>Archaea</taxon>
        <taxon>Methanobacteriati</taxon>
        <taxon>Thermoplasmatota</taxon>
        <taxon>Thermoplasmata</taxon>
        <taxon>Thermoplasmatales</taxon>
        <taxon>Thermoplasmataceae</taxon>
        <taxon>Thermoplasma</taxon>
    </lineage>
</organism>
<sequence length="224" mass="24999">MIKLVAIDVDGTLTDKDRLISTRAIEFIRKAEKKGIIVSLLSGNVIPVVYALKVFIGINGPVFGENGGVMFDNDGSITKFFSNEKTNSFLDEMSKKTSMRSIFTNKWREASTGFDIDGKDVDYVKAEAEKRGLVVFYSGYSWHLMNKGEDKGFAVKILKEKYGLNYEEILVVGDSNNDMPMFELPVFKACPANATDNVKKASDFVSSYSYGEEIGEVFSHFNLL</sequence>
<name>PGP_THEVO</name>
<comment type="function">
    <text evidence="1">Catalyzes the dephosphorylation of 2-phosphoglycolate.</text>
</comment>
<comment type="catalytic activity">
    <reaction evidence="1">
        <text>2-phosphoglycolate + H2O = glycolate + phosphate</text>
        <dbReference type="Rhea" id="RHEA:14369"/>
        <dbReference type="ChEBI" id="CHEBI:15377"/>
        <dbReference type="ChEBI" id="CHEBI:29805"/>
        <dbReference type="ChEBI" id="CHEBI:43474"/>
        <dbReference type="ChEBI" id="CHEBI:58033"/>
        <dbReference type="EC" id="3.1.3.18"/>
    </reaction>
</comment>
<comment type="cofactor">
    <cofactor evidence="1">
        <name>Mg(2+)</name>
        <dbReference type="ChEBI" id="CHEBI:18420"/>
    </cofactor>
</comment>
<comment type="similarity">
    <text evidence="1">Belongs to the archaeal SPP-like hydrolase family.</text>
</comment>
<dbReference type="EC" id="3.1.3.18" evidence="1"/>
<dbReference type="EMBL" id="BA000011">
    <property type="protein sequence ID" value="BAB59425.1"/>
    <property type="molecule type" value="Genomic_DNA"/>
</dbReference>
<dbReference type="RefSeq" id="WP_010916538.1">
    <property type="nucleotide sequence ID" value="NC_002689.2"/>
</dbReference>
<dbReference type="SMR" id="Q97C22"/>
<dbReference type="STRING" id="273116.gene:9381057"/>
<dbReference type="PaxDb" id="273116-14324497"/>
<dbReference type="GeneID" id="1440796"/>
<dbReference type="KEGG" id="tvo:TVG0294815"/>
<dbReference type="eggNOG" id="arCOG01213">
    <property type="taxonomic scope" value="Archaea"/>
</dbReference>
<dbReference type="HOGENOM" id="CLU_044146_2_0_2"/>
<dbReference type="OrthoDB" id="120822at2157"/>
<dbReference type="PhylomeDB" id="Q97C22"/>
<dbReference type="Proteomes" id="UP000001017">
    <property type="component" value="Chromosome"/>
</dbReference>
<dbReference type="GO" id="GO:0005829">
    <property type="term" value="C:cytosol"/>
    <property type="evidence" value="ECO:0007669"/>
    <property type="project" value="TreeGrafter"/>
</dbReference>
<dbReference type="GO" id="GO:0000287">
    <property type="term" value="F:magnesium ion binding"/>
    <property type="evidence" value="ECO:0007669"/>
    <property type="project" value="InterPro"/>
</dbReference>
<dbReference type="GO" id="GO:0008967">
    <property type="term" value="F:phosphoglycolate phosphatase activity"/>
    <property type="evidence" value="ECO:0007669"/>
    <property type="project" value="UniProtKB-UniRule"/>
</dbReference>
<dbReference type="CDD" id="cd07514">
    <property type="entry name" value="HAD_Pase"/>
    <property type="match status" value="1"/>
</dbReference>
<dbReference type="Gene3D" id="3.90.1070.10">
    <property type="match status" value="1"/>
</dbReference>
<dbReference type="Gene3D" id="3.40.50.1000">
    <property type="entry name" value="HAD superfamily/HAD-like"/>
    <property type="match status" value="1"/>
</dbReference>
<dbReference type="HAMAP" id="MF_01419">
    <property type="entry name" value="GPH_hydrolase_arch"/>
    <property type="match status" value="1"/>
</dbReference>
<dbReference type="InterPro" id="IPR036412">
    <property type="entry name" value="HAD-like_sf"/>
</dbReference>
<dbReference type="InterPro" id="IPR006379">
    <property type="entry name" value="HAD-SF_hydro_IIB"/>
</dbReference>
<dbReference type="InterPro" id="IPR023214">
    <property type="entry name" value="HAD_sf"/>
</dbReference>
<dbReference type="InterPro" id="IPR006382">
    <property type="entry name" value="PGPase"/>
</dbReference>
<dbReference type="NCBIfam" id="TIGR01484">
    <property type="entry name" value="HAD-SF-IIB"/>
    <property type="match status" value="1"/>
</dbReference>
<dbReference type="NCBIfam" id="TIGR01487">
    <property type="entry name" value="Pglycolate_arch"/>
    <property type="match status" value="1"/>
</dbReference>
<dbReference type="NCBIfam" id="NF002245">
    <property type="entry name" value="PRK01158.1"/>
    <property type="match status" value="1"/>
</dbReference>
<dbReference type="NCBIfam" id="TIGR01482">
    <property type="entry name" value="SPP-subfamily"/>
    <property type="match status" value="1"/>
</dbReference>
<dbReference type="PANTHER" id="PTHR10000:SF8">
    <property type="entry name" value="HAD SUPERFAMILY HYDROLASE-LIKE, TYPE 3"/>
    <property type="match status" value="1"/>
</dbReference>
<dbReference type="PANTHER" id="PTHR10000">
    <property type="entry name" value="PHOSPHOSERINE PHOSPHATASE"/>
    <property type="match status" value="1"/>
</dbReference>
<dbReference type="Pfam" id="PF08282">
    <property type="entry name" value="Hydrolase_3"/>
    <property type="match status" value="2"/>
</dbReference>
<dbReference type="SFLD" id="SFLDG01144">
    <property type="entry name" value="C2.B.4:_PGP_Like"/>
    <property type="match status" value="1"/>
</dbReference>
<dbReference type="SFLD" id="SFLDF00446">
    <property type="entry name" value="phosphoglycolate_phosphatase_3"/>
    <property type="match status" value="1"/>
</dbReference>
<dbReference type="SUPFAM" id="SSF56784">
    <property type="entry name" value="HAD-like"/>
    <property type="match status" value="1"/>
</dbReference>
<protein>
    <recommendedName>
        <fullName evidence="1">Phosphoglycolate phosphatase</fullName>
        <shortName evidence="1">PGP</shortName>
        <shortName evidence="1">PGPase</shortName>
        <ecNumber evidence="1">3.1.3.18</ecNumber>
    </recommendedName>
</protein>
<feature type="chain" id="PRO_0000146732" description="Phosphoglycolate phosphatase">
    <location>
        <begin position="1"/>
        <end position="224"/>
    </location>
</feature>
<feature type="active site" description="Nucleophile" evidence="1">
    <location>
        <position position="8"/>
    </location>
</feature>
<feature type="binding site" evidence="1">
    <location>
        <position position="8"/>
    </location>
    <ligand>
        <name>Mg(2+)</name>
        <dbReference type="ChEBI" id="CHEBI:18420"/>
    </ligand>
</feature>
<feature type="binding site" evidence="1">
    <location>
        <position position="10"/>
    </location>
    <ligand>
        <name>Mg(2+)</name>
        <dbReference type="ChEBI" id="CHEBI:18420"/>
    </ligand>
</feature>
<feature type="binding site" evidence="1">
    <location>
        <position position="151"/>
    </location>
    <ligand>
        <name>substrate</name>
    </ligand>
</feature>
<feature type="binding site" evidence="1">
    <location>
        <position position="174"/>
    </location>
    <ligand>
        <name>Mg(2+)</name>
        <dbReference type="ChEBI" id="CHEBI:18420"/>
    </ligand>
</feature>
<feature type="binding site" evidence="1">
    <location>
        <position position="178"/>
    </location>
    <ligand>
        <name>Mg(2+)</name>
        <dbReference type="ChEBI" id="CHEBI:18420"/>
    </ligand>
</feature>
<gene>
    <name type="ordered locus">TV0283</name>
    <name type="ORF">TVG0294815</name>
</gene>